<sequence>MSLVSQNSRRRRGGRANGRKNSGKGRPAAVPGPAVPRDRSDPQILQGLGATEGPGTSVLPTPRGGSSTSVPPTASEGSSAPGQLITSEGRNTSQLPTSRKGRGTRRPPAVSAGLNAAASITASEGASTPVLPTAPKGSKASEHLTISEGASISEQPQSHEGPNVQPTLGEGSGTSVPPTFSEESGISEPLPSGEGLSISVSPTISEGAGINEPSPASKAPSTSVPPTASNGLGINLPPTSSEGLSISVLFSASEESDISVPPPSAEGLSTSMPPPSGEVQSTWVPPIILEGCSVKVRSTSRKGRRTPVRSAACESPSPSAECLSTSLSSISAEGFCSSLAPCAEGSDTCELLPCGEGPSTSGLHDLEEESSISQMPLAAEGPSASGSSIEDENPEEALSCGASVGMNLCKCTSLALQKADDPSVRPKRAEGFLDFQVLRDSENSNSITIMGLGTAHVALTLKPQDPMEQNVAELLQFLLLKDQTKYPIKESEMREFIVQEYRNQFPEILRRAAAHLECIFRFELKELDPEEHTYILLNKLGPVPFEGLEDIPNGPKMGLLMMILGQIFLNGNQAREADIWEMLWRFGVQRERRLSVFGNPKRLLSVEFVWQRYLDYRPITDCVPVEYEFYWGPRSHVETTKMKILKFMARIYNKDPMDWPAQYNEALEEEAERDVPNNWRAVPHFRRPLFQEVSPELLASDSDAPGCPSKYSPHSWPESRLESKSRKLVQLFLLMDSTKLPIPKKGILYYIGRECSKVFPDLLNRAARTLNHVYGTELVVLDPRNHSYTLYNRREMEDMEEIMDSPNRPGNNFLMQVLSFIFIMGNHARESAVWAFLRGLGVQNGRKHVITCRYLSQRYIDSLRVPDSDPVQYDFVWGPRARLETSKMKALRYVARIHRKEPQDWPDQYREALEDEANRAEAGRRPLVVRNLR</sequence>
<proteinExistence type="evidence at transcript level"/>
<reference key="1">
    <citation type="submission" date="2005-09" db="EMBL/GenBank/DDBJ databases">
        <authorList>
            <person name="Mural R.J."/>
            <person name="Adams M.D."/>
            <person name="Myers E.W."/>
            <person name="Smith H.O."/>
            <person name="Venter J.C."/>
        </authorList>
    </citation>
    <scope>NUCLEOTIDE SEQUENCE [LARGE SCALE GENOMIC DNA]</scope>
    <source>
        <strain>Brown Norway</strain>
    </source>
</reference>
<reference key="2">
    <citation type="journal article" date="2004" name="Genome Res.">
        <title>The status, quality, and expansion of the NIH full-length cDNA project: the Mammalian Gene Collection (MGC).</title>
        <authorList>
            <consortium name="The MGC Project Team"/>
        </authorList>
    </citation>
    <scope>NUCLEOTIDE SEQUENCE [LARGE SCALE MRNA]</scope>
    <source>
        <tissue>Heart</tissue>
    </source>
</reference>
<protein>
    <recommendedName>
        <fullName>Melanoma-associated antigen E1</fullName>
    </recommendedName>
    <alternativeName>
        <fullName>Alpha-dystrobrevin-associated MAGE Protein</fullName>
        <shortName>DAMAGE</shortName>
    </alternativeName>
    <alternativeName>
        <fullName>MAGE-E1 antigen</fullName>
    </alternativeName>
</protein>
<comment type="function">
    <text evidence="1">May enhance ubiquitin ligase activity of RING-type zinc finger-containing E3 ubiquitin-protein ligases. Proposed to act through recruitment and/or stabilization of the Ubl-conjugating enzyme (E2) at the E3:substrate complex (By similarity).</text>
</comment>
<comment type="subunit">
    <text evidence="1">Interacts with DTNA. Interacts with TRIM28.</text>
</comment>
<comment type="subcellular location">
    <subcellularLocation>
        <location evidence="1">Cytoplasm</location>
        <location evidence="1">Perinuclear region</location>
    </subcellularLocation>
    <subcellularLocation>
        <location evidence="1">Nucleus</location>
    </subcellularLocation>
    <subcellularLocation>
        <location evidence="1">Cell membrane</location>
    </subcellularLocation>
    <text evidence="1">In the skeletal muscle, found at the postsynaptic membrane and is associated with a subset of myonuclei. May reside within nuclei and/or in perinuclear compartments. In peripheral nerves, colocalizes with DTNA in the Schwann cell membrane (By similarity).</text>
</comment>
<name>MAGE1_RAT</name>
<dbReference type="EMBL" id="CH473969">
    <property type="protein sequence ID" value="EDM07152.1"/>
    <property type="molecule type" value="Genomic_DNA"/>
</dbReference>
<dbReference type="EMBL" id="BC128754">
    <property type="protein sequence ID" value="AAI28755.1"/>
    <property type="molecule type" value="mRNA"/>
</dbReference>
<dbReference type="RefSeq" id="NP_001073360.1">
    <property type="nucleotide sequence ID" value="NM_001079891.1"/>
</dbReference>
<dbReference type="SMR" id="A1A5P9"/>
<dbReference type="BioGRID" id="261486">
    <property type="interactions" value="1"/>
</dbReference>
<dbReference type="FunCoup" id="A1A5P9">
    <property type="interactions" value="130"/>
</dbReference>
<dbReference type="STRING" id="10116.ENSRNOP00000054396"/>
<dbReference type="GlyGen" id="A1A5P9">
    <property type="glycosylation" value="2 sites"/>
</dbReference>
<dbReference type="iPTMnet" id="A1A5P9"/>
<dbReference type="PhosphoSitePlus" id="A1A5P9"/>
<dbReference type="PaxDb" id="10116-ENSRNOP00000054396"/>
<dbReference type="Ensembl" id="ENSRNOT00000003573.8">
    <property type="protein sequence ID" value="ENSRNOP00000054396.3"/>
    <property type="gene ID" value="ENSRNOG00000002660.8"/>
</dbReference>
<dbReference type="GeneID" id="317232"/>
<dbReference type="KEGG" id="rno:317232"/>
<dbReference type="UCSC" id="RGD:1560259">
    <property type="organism name" value="rat"/>
</dbReference>
<dbReference type="AGR" id="RGD:1560259"/>
<dbReference type="CTD" id="57692"/>
<dbReference type="RGD" id="1560259">
    <property type="gene designation" value="Magee1"/>
</dbReference>
<dbReference type="eggNOG" id="KOG4562">
    <property type="taxonomic scope" value="Eukaryota"/>
</dbReference>
<dbReference type="GeneTree" id="ENSGT00940000163182"/>
<dbReference type="HOGENOM" id="CLU_012911_0_0_1"/>
<dbReference type="InParanoid" id="A1A5P9"/>
<dbReference type="OMA" id="CTPVEYE"/>
<dbReference type="OrthoDB" id="205198at2759"/>
<dbReference type="PhylomeDB" id="A1A5P9"/>
<dbReference type="PRO" id="PR:A1A5P9"/>
<dbReference type="Proteomes" id="UP000002494">
    <property type="component" value="Chromosome X"/>
</dbReference>
<dbReference type="Proteomes" id="UP000234681">
    <property type="component" value="Chromosome x"/>
</dbReference>
<dbReference type="Bgee" id="ENSRNOG00000002660">
    <property type="expression patterns" value="Expressed in Ammon's horn and 19 other cell types or tissues"/>
</dbReference>
<dbReference type="GO" id="GO:0030425">
    <property type="term" value="C:dendrite"/>
    <property type="evidence" value="ECO:0000266"/>
    <property type="project" value="RGD"/>
</dbReference>
<dbReference type="GO" id="GO:0005634">
    <property type="term" value="C:nucleus"/>
    <property type="evidence" value="ECO:0000266"/>
    <property type="project" value="RGD"/>
</dbReference>
<dbReference type="GO" id="GO:0048471">
    <property type="term" value="C:perinuclear region of cytoplasm"/>
    <property type="evidence" value="ECO:0000266"/>
    <property type="project" value="RGD"/>
</dbReference>
<dbReference type="GO" id="GO:0005886">
    <property type="term" value="C:plasma membrane"/>
    <property type="evidence" value="ECO:0000266"/>
    <property type="project" value="RGD"/>
</dbReference>
<dbReference type="GO" id="GO:0045211">
    <property type="term" value="C:postsynaptic membrane"/>
    <property type="evidence" value="ECO:0000266"/>
    <property type="project" value="RGD"/>
</dbReference>
<dbReference type="GO" id="GO:0000122">
    <property type="term" value="P:negative regulation of transcription by RNA polymerase II"/>
    <property type="evidence" value="ECO:0000318"/>
    <property type="project" value="GO_Central"/>
</dbReference>
<dbReference type="FunFam" id="1.10.10.1210:FF:000001">
    <property type="entry name" value="melanoma-associated antigen D1"/>
    <property type="match status" value="1"/>
</dbReference>
<dbReference type="FunFam" id="1.10.10.1200:FF:000004">
    <property type="entry name" value="Melanoma-associated antigen E1"/>
    <property type="match status" value="1"/>
</dbReference>
<dbReference type="FunFam" id="1.10.10.1210:FF:000002">
    <property type="entry name" value="melanoma-associated antigen E1"/>
    <property type="match status" value="1"/>
</dbReference>
<dbReference type="Gene3D" id="1.10.10.1200">
    <property type="entry name" value="MAGE homology domain, winged helix WH1 motif"/>
    <property type="match status" value="2"/>
</dbReference>
<dbReference type="Gene3D" id="1.10.10.1210">
    <property type="entry name" value="MAGE homology domain, winged helix WH2 motif"/>
    <property type="match status" value="2"/>
</dbReference>
<dbReference type="InterPro" id="IPR037445">
    <property type="entry name" value="MAGE"/>
</dbReference>
<dbReference type="InterPro" id="IPR041898">
    <property type="entry name" value="MAGE_WH1"/>
</dbReference>
<dbReference type="InterPro" id="IPR041899">
    <property type="entry name" value="MAGE_WH2"/>
</dbReference>
<dbReference type="InterPro" id="IPR002190">
    <property type="entry name" value="MHD_dom"/>
</dbReference>
<dbReference type="PANTHER" id="PTHR11736:SF9">
    <property type="entry name" value="MELANOMA-ASSOCIATED ANTIGEN E1"/>
    <property type="match status" value="1"/>
</dbReference>
<dbReference type="PANTHER" id="PTHR11736">
    <property type="entry name" value="MELANOMA-ASSOCIATED ANTIGEN MAGE ANTIGEN"/>
    <property type="match status" value="1"/>
</dbReference>
<dbReference type="Pfam" id="PF01454">
    <property type="entry name" value="MAGE"/>
    <property type="match status" value="2"/>
</dbReference>
<dbReference type="SMART" id="SM01373">
    <property type="entry name" value="MAGE"/>
    <property type="match status" value="2"/>
</dbReference>
<dbReference type="PROSITE" id="PS50838">
    <property type="entry name" value="MAGE"/>
    <property type="match status" value="2"/>
</dbReference>
<gene>
    <name type="primary">Magee1</name>
</gene>
<organism>
    <name type="scientific">Rattus norvegicus</name>
    <name type="common">Rat</name>
    <dbReference type="NCBI Taxonomy" id="10116"/>
    <lineage>
        <taxon>Eukaryota</taxon>
        <taxon>Metazoa</taxon>
        <taxon>Chordata</taxon>
        <taxon>Craniata</taxon>
        <taxon>Vertebrata</taxon>
        <taxon>Euteleostomi</taxon>
        <taxon>Mammalia</taxon>
        <taxon>Eutheria</taxon>
        <taxon>Euarchontoglires</taxon>
        <taxon>Glires</taxon>
        <taxon>Rodentia</taxon>
        <taxon>Myomorpha</taxon>
        <taxon>Muroidea</taxon>
        <taxon>Muridae</taxon>
        <taxon>Murinae</taxon>
        <taxon>Rattus</taxon>
    </lineage>
</organism>
<accession>A1A5P9</accession>
<feature type="chain" id="PRO_0000404300" description="Melanoma-associated antigen E1">
    <location>
        <begin position="1"/>
        <end position="933"/>
    </location>
</feature>
<feature type="domain" description="MAGE 1" evidence="2">
    <location>
        <begin position="467"/>
        <end position="666"/>
    </location>
</feature>
<feature type="domain" description="MAGE 2" evidence="2">
    <location>
        <begin position="721"/>
        <end position="912"/>
    </location>
</feature>
<feature type="region of interest" description="Disordered" evidence="3">
    <location>
        <begin position="1"/>
        <end position="113"/>
    </location>
</feature>
<feature type="region of interest" description="Disordered" evidence="3">
    <location>
        <begin position="149"/>
        <end position="236"/>
    </location>
</feature>
<feature type="region of interest" description="Disordered" evidence="3">
    <location>
        <begin position="256"/>
        <end position="282"/>
    </location>
</feature>
<feature type="region of interest" description="Disordered" evidence="3">
    <location>
        <begin position="360"/>
        <end position="393"/>
    </location>
</feature>
<feature type="region of interest" description="Interaction with DTNA" evidence="1">
    <location>
        <begin position="719"/>
        <end position="933"/>
    </location>
</feature>
<feature type="compositionally biased region" description="Basic residues" evidence="3">
    <location>
        <begin position="8"/>
        <end position="23"/>
    </location>
</feature>
<feature type="compositionally biased region" description="Polar residues" evidence="3">
    <location>
        <begin position="64"/>
        <end position="97"/>
    </location>
</feature>
<feature type="compositionally biased region" description="Polar residues" evidence="3">
    <location>
        <begin position="149"/>
        <end position="166"/>
    </location>
</feature>
<feature type="compositionally biased region" description="Polar residues" evidence="3">
    <location>
        <begin position="173"/>
        <end position="184"/>
    </location>
</feature>
<feature type="compositionally biased region" description="Polar residues" evidence="3">
    <location>
        <begin position="219"/>
        <end position="236"/>
    </location>
</feature>
<evidence type="ECO:0000250" key="1"/>
<evidence type="ECO:0000255" key="2">
    <source>
        <dbReference type="PROSITE-ProRule" id="PRU00127"/>
    </source>
</evidence>
<evidence type="ECO:0000256" key="3">
    <source>
        <dbReference type="SAM" id="MobiDB-lite"/>
    </source>
</evidence>
<keyword id="KW-1003">Cell membrane</keyword>
<keyword id="KW-0963">Cytoplasm</keyword>
<keyword id="KW-0472">Membrane</keyword>
<keyword id="KW-0539">Nucleus</keyword>
<keyword id="KW-1185">Reference proteome</keyword>
<keyword id="KW-0677">Repeat</keyword>
<keyword id="KW-0825">Tumor antigen</keyword>
<keyword id="KW-0833">Ubl conjugation pathway</keyword>